<organism>
    <name type="scientific">Thermosipho melanesiensis (strain DSM 12029 / CIP 104789 / BI429)</name>
    <dbReference type="NCBI Taxonomy" id="391009"/>
    <lineage>
        <taxon>Bacteria</taxon>
        <taxon>Thermotogati</taxon>
        <taxon>Thermotogota</taxon>
        <taxon>Thermotogae</taxon>
        <taxon>Thermotogales</taxon>
        <taxon>Fervidobacteriaceae</taxon>
        <taxon>Thermosipho</taxon>
    </lineage>
</organism>
<sequence length="197" mass="23005">MSLKNSLVIYGGSFNPPHNGHIIIAQLVREMFRFADFHVVTSSTPPHKKVDVSFKERFFLTKKAFEKVEGITVSDIEHRLGGVSYAINTIEYYEKKYSHIFFLVGEDALYSIEKWYRYEDILKKAHMLVYPRFKDELVYKKVERVLESLSNSIYILKLPLIQISSTVVRERAIKGLSLYGFVPQHIISYVEEIYGNR</sequence>
<name>NADD_THEM4</name>
<comment type="function">
    <text evidence="1">Catalyzes the reversible adenylation of nicotinate mononucleotide (NaMN) to nicotinic acid adenine dinucleotide (NaAD).</text>
</comment>
<comment type="catalytic activity">
    <reaction evidence="1">
        <text>nicotinate beta-D-ribonucleotide + ATP + H(+) = deamido-NAD(+) + diphosphate</text>
        <dbReference type="Rhea" id="RHEA:22860"/>
        <dbReference type="ChEBI" id="CHEBI:15378"/>
        <dbReference type="ChEBI" id="CHEBI:30616"/>
        <dbReference type="ChEBI" id="CHEBI:33019"/>
        <dbReference type="ChEBI" id="CHEBI:57502"/>
        <dbReference type="ChEBI" id="CHEBI:58437"/>
        <dbReference type="EC" id="2.7.7.18"/>
    </reaction>
</comment>
<comment type="pathway">
    <text evidence="1">Cofactor biosynthesis; NAD(+) biosynthesis; deamido-NAD(+) from nicotinate D-ribonucleotide: step 1/1.</text>
</comment>
<comment type="similarity">
    <text evidence="1">Belongs to the NadD family.</text>
</comment>
<reference key="1">
    <citation type="submission" date="2007-05" db="EMBL/GenBank/DDBJ databases">
        <title>Complete sequence of Thermosipho melanesiensis BI429.</title>
        <authorList>
            <consortium name="US DOE Joint Genome Institute"/>
            <person name="Copeland A."/>
            <person name="Lucas S."/>
            <person name="Lapidus A."/>
            <person name="Barry K."/>
            <person name="Glavina del Rio T."/>
            <person name="Dalin E."/>
            <person name="Tice H."/>
            <person name="Pitluck S."/>
            <person name="Chertkov O."/>
            <person name="Brettin T."/>
            <person name="Bruce D."/>
            <person name="Detter J.C."/>
            <person name="Han C."/>
            <person name="Schmutz J."/>
            <person name="Larimer F."/>
            <person name="Land M."/>
            <person name="Hauser L."/>
            <person name="Kyrpides N."/>
            <person name="Mikhailova N."/>
            <person name="Nelson K."/>
            <person name="Gogarten J.P."/>
            <person name="Noll K."/>
            <person name="Richardson P."/>
        </authorList>
    </citation>
    <scope>NUCLEOTIDE SEQUENCE [LARGE SCALE GENOMIC DNA]</scope>
    <source>
        <strain>DSM 12029 / CIP 104789 / BI429</strain>
    </source>
</reference>
<protein>
    <recommendedName>
        <fullName evidence="1">Probable nicotinate-nucleotide adenylyltransferase</fullName>
        <ecNumber evidence="1">2.7.7.18</ecNumber>
    </recommendedName>
    <alternativeName>
        <fullName evidence="1">Deamido-NAD(+) diphosphorylase</fullName>
    </alternativeName>
    <alternativeName>
        <fullName evidence="1">Deamido-NAD(+) pyrophosphorylase</fullName>
    </alternativeName>
    <alternativeName>
        <fullName evidence="1">Nicotinate mononucleotide adenylyltransferase</fullName>
        <shortName evidence="1">NaMN adenylyltransferase</shortName>
    </alternativeName>
</protein>
<dbReference type="EC" id="2.7.7.18" evidence="1"/>
<dbReference type="EMBL" id="CP000716">
    <property type="protein sequence ID" value="ABR30242.1"/>
    <property type="molecule type" value="Genomic_DNA"/>
</dbReference>
<dbReference type="SMR" id="A6LJZ1"/>
<dbReference type="STRING" id="391009.Tmel_0373"/>
<dbReference type="KEGG" id="tme:Tmel_0373"/>
<dbReference type="eggNOG" id="COG1057">
    <property type="taxonomic scope" value="Bacteria"/>
</dbReference>
<dbReference type="HOGENOM" id="CLU_069765_3_2_0"/>
<dbReference type="UniPathway" id="UPA00253">
    <property type="reaction ID" value="UER00332"/>
</dbReference>
<dbReference type="Proteomes" id="UP000001110">
    <property type="component" value="Chromosome"/>
</dbReference>
<dbReference type="GO" id="GO:0005524">
    <property type="term" value="F:ATP binding"/>
    <property type="evidence" value="ECO:0007669"/>
    <property type="project" value="UniProtKB-KW"/>
</dbReference>
<dbReference type="GO" id="GO:0004515">
    <property type="term" value="F:nicotinate-nucleotide adenylyltransferase activity"/>
    <property type="evidence" value="ECO:0007669"/>
    <property type="project" value="UniProtKB-UniRule"/>
</dbReference>
<dbReference type="GO" id="GO:0009435">
    <property type="term" value="P:NAD biosynthetic process"/>
    <property type="evidence" value="ECO:0007669"/>
    <property type="project" value="UniProtKB-UniRule"/>
</dbReference>
<dbReference type="CDD" id="cd02165">
    <property type="entry name" value="NMNAT"/>
    <property type="match status" value="1"/>
</dbReference>
<dbReference type="Gene3D" id="3.40.50.620">
    <property type="entry name" value="HUPs"/>
    <property type="match status" value="1"/>
</dbReference>
<dbReference type="HAMAP" id="MF_00244">
    <property type="entry name" value="NaMN_adenylyltr"/>
    <property type="match status" value="1"/>
</dbReference>
<dbReference type="InterPro" id="IPR004821">
    <property type="entry name" value="Cyt_trans-like"/>
</dbReference>
<dbReference type="InterPro" id="IPR005248">
    <property type="entry name" value="NadD/NMNAT"/>
</dbReference>
<dbReference type="InterPro" id="IPR014729">
    <property type="entry name" value="Rossmann-like_a/b/a_fold"/>
</dbReference>
<dbReference type="NCBIfam" id="TIGR00125">
    <property type="entry name" value="cyt_tran_rel"/>
    <property type="match status" value="1"/>
</dbReference>
<dbReference type="NCBIfam" id="TIGR00482">
    <property type="entry name" value="nicotinate (nicotinamide) nucleotide adenylyltransferase"/>
    <property type="match status" value="1"/>
</dbReference>
<dbReference type="PANTHER" id="PTHR39321">
    <property type="entry name" value="NICOTINATE-NUCLEOTIDE ADENYLYLTRANSFERASE-RELATED"/>
    <property type="match status" value="1"/>
</dbReference>
<dbReference type="PANTHER" id="PTHR39321:SF3">
    <property type="entry name" value="PHOSPHOPANTETHEINE ADENYLYLTRANSFERASE"/>
    <property type="match status" value="1"/>
</dbReference>
<dbReference type="Pfam" id="PF01467">
    <property type="entry name" value="CTP_transf_like"/>
    <property type="match status" value="1"/>
</dbReference>
<dbReference type="SUPFAM" id="SSF52374">
    <property type="entry name" value="Nucleotidylyl transferase"/>
    <property type="match status" value="1"/>
</dbReference>
<feature type="chain" id="PRO_0000336743" description="Probable nicotinate-nucleotide adenylyltransferase">
    <location>
        <begin position="1"/>
        <end position="197"/>
    </location>
</feature>
<keyword id="KW-0067">ATP-binding</keyword>
<keyword id="KW-0520">NAD</keyword>
<keyword id="KW-0547">Nucleotide-binding</keyword>
<keyword id="KW-0548">Nucleotidyltransferase</keyword>
<keyword id="KW-0662">Pyridine nucleotide biosynthesis</keyword>
<keyword id="KW-0808">Transferase</keyword>
<gene>
    <name evidence="1" type="primary">nadD</name>
    <name type="ordered locus">Tmel_0373</name>
</gene>
<proteinExistence type="inferred from homology"/>
<accession>A6LJZ1</accession>
<evidence type="ECO:0000255" key="1">
    <source>
        <dbReference type="HAMAP-Rule" id="MF_00244"/>
    </source>
</evidence>